<organism>
    <name type="scientific">Streptococcus pyogenes serotype M2 (strain MGAS10270)</name>
    <dbReference type="NCBI Taxonomy" id="370552"/>
    <lineage>
        <taxon>Bacteria</taxon>
        <taxon>Bacillati</taxon>
        <taxon>Bacillota</taxon>
        <taxon>Bacilli</taxon>
        <taxon>Lactobacillales</taxon>
        <taxon>Streptococcaceae</taxon>
        <taxon>Streptococcus</taxon>
    </lineage>
</organism>
<comment type="function">
    <text evidence="1">An aminoacyl-tRNA editing enzyme that deacylates mischarged D-aminoacyl-tRNAs. Also deacylates mischarged glycyl-tRNA(Ala), protecting cells against glycine mischarging by AlaRS. Acts via tRNA-based rather than protein-based catalysis; rejects L-amino acids rather than detecting D-amino acids in the active site. By recycling D-aminoacyl-tRNA to D-amino acids and free tRNA molecules, this enzyme counteracts the toxicity associated with the formation of D-aminoacyl-tRNA entities in vivo and helps enforce protein L-homochirality.</text>
</comment>
<comment type="catalytic activity">
    <reaction evidence="1">
        <text>glycyl-tRNA(Ala) + H2O = tRNA(Ala) + glycine + H(+)</text>
        <dbReference type="Rhea" id="RHEA:53744"/>
        <dbReference type="Rhea" id="RHEA-COMP:9657"/>
        <dbReference type="Rhea" id="RHEA-COMP:13640"/>
        <dbReference type="ChEBI" id="CHEBI:15377"/>
        <dbReference type="ChEBI" id="CHEBI:15378"/>
        <dbReference type="ChEBI" id="CHEBI:57305"/>
        <dbReference type="ChEBI" id="CHEBI:78442"/>
        <dbReference type="ChEBI" id="CHEBI:78522"/>
        <dbReference type="EC" id="3.1.1.96"/>
    </reaction>
</comment>
<comment type="catalytic activity">
    <reaction evidence="1">
        <text>a D-aminoacyl-tRNA + H2O = a tRNA + a D-alpha-amino acid + H(+)</text>
        <dbReference type="Rhea" id="RHEA:13953"/>
        <dbReference type="Rhea" id="RHEA-COMP:10123"/>
        <dbReference type="Rhea" id="RHEA-COMP:10124"/>
        <dbReference type="ChEBI" id="CHEBI:15377"/>
        <dbReference type="ChEBI" id="CHEBI:15378"/>
        <dbReference type="ChEBI" id="CHEBI:59871"/>
        <dbReference type="ChEBI" id="CHEBI:78442"/>
        <dbReference type="ChEBI" id="CHEBI:79333"/>
        <dbReference type="EC" id="3.1.1.96"/>
    </reaction>
</comment>
<comment type="subunit">
    <text evidence="1">Homodimer.</text>
</comment>
<comment type="subcellular location">
    <subcellularLocation>
        <location evidence="1">Cytoplasm</location>
    </subcellularLocation>
</comment>
<comment type="domain">
    <text evidence="1">A Gly-cisPro motif from one monomer fits into the active site of the other monomer to allow specific chiral rejection of L-amino acids.</text>
</comment>
<comment type="similarity">
    <text evidence="1">Belongs to the DTD family.</text>
</comment>
<name>DTD_STRPD</name>
<accession>Q1JEU0</accession>
<sequence length="147" mass="15843">MKLVLQRVKEASVSIDGKIAGAINQGLLLLVGVGPDDNAEDLAYAVRKIVNMRIFSDADGKMNQSIQDIKGSILSVSQFTLYADTKKGNRPAFTGAAKPDLASQLYDSFNEQLAEFVPVERGVFGADMQVSLINDGPVTIILDTKCH</sequence>
<evidence type="ECO:0000255" key="1">
    <source>
        <dbReference type="HAMAP-Rule" id="MF_00518"/>
    </source>
</evidence>
<protein>
    <recommendedName>
        <fullName evidence="1">D-aminoacyl-tRNA deacylase</fullName>
        <shortName evidence="1">DTD</shortName>
        <ecNumber evidence="1">3.1.1.96</ecNumber>
    </recommendedName>
    <alternativeName>
        <fullName evidence="1">Gly-tRNA(Ala) deacylase</fullName>
    </alternativeName>
</protein>
<gene>
    <name evidence="1" type="primary">dtd</name>
    <name type="ordered locus">MGAS10270_Spy1754</name>
</gene>
<dbReference type="EC" id="3.1.1.96" evidence="1"/>
<dbReference type="EMBL" id="CP000260">
    <property type="protein sequence ID" value="ABF34819.1"/>
    <property type="molecule type" value="Genomic_DNA"/>
</dbReference>
<dbReference type="SMR" id="Q1JEU0"/>
<dbReference type="KEGG" id="sph:MGAS10270_Spy1754"/>
<dbReference type="HOGENOM" id="CLU_076901_1_0_9"/>
<dbReference type="Proteomes" id="UP000002436">
    <property type="component" value="Chromosome"/>
</dbReference>
<dbReference type="GO" id="GO:0005737">
    <property type="term" value="C:cytoplasm"/>
    <property type="evidence" value="ECO:0007669"/>
    <property type="project" value="UniProtKB-SubCell"/>
</dbReference>
<dbReference type="GO" id="GO:0051500">
    <property type="term" value="F:D-tyrosyl-tRNA(Tyr) deacylase activity"/>
    <property type="evidence" value="ECO:0007669"/>
    <property type="project" value="TreeGrafter"/>
</dbReference>
<dbReference type="GO" id="GO:0106026">
    <property type="term" value="F:Gly-tRNA(Ala) deacylase activity"/>
    <property type="evidence" value="ECO:0007669"/>
    <property type="project" value="UniProtKB-UniRule"/>
</dbReference>
<dbReference type="GO" id="GO:0043908">
    <property type="term" value="F:Ser(Gly)-tRNA(Ala) hydrolase activity"/>
    <property type="evidence" value="ECO:0007669"/>
    <property type="project" value="UniProtKB-UniRule"/>
</dbReference>
<dbReference type="GO" id="GO:0000049">
    <property type="term" value="F:tRNA binding"/>
    <property type="evidence" value="ECO:0007669"/>
    <property type="project" value="UniProtKB-UniRule"/>
</dbReference>
<dbReference type="GO" id="GO:0019478">
    <property type="term" value="P:D-amino acid catabolic process"/>
    <property type="evidence" value="ECO:0007669"/>
    <property type="project" value="UniProtKB-UniRule"/>
</dbReference>
<dbReference type="CDD" id="cd00563">
    <property type="entry name" value="Dtyr_deacylase"/>
    <property type="match status" value="1"/>
</dbReference>
<dbReference type="FunFam" id="3.50.80.10:FF:000001">
    <property type="entry name" value="D-aminoacyl-tRNA deacylase"/>
    <property type="match status" value="1"/>
</dbReference>
<dbReference type="Gene3D" id="3.50.80.10">
    <property type="entry name" value="D-tyrosyl-tRNA(Tyr) deacylase"/>
    <property type="match status" value="1"/>
</dbReference>
<dbReference type="HAMAP" id="MF_00518">
    <property type="entry name" value="Deacylase_Dtd"/>
    <property type="match status" value="1"/>
</dbReference>
<dbReference type="InterPro" id="IPR003732">
    <property type="entry name" value="Daa-tRNA_deacyls_DTD"/>
</dbReference>
<dbReference type="InterPro" id="IPR023509">
    <property type="entry name" value="DTD-like_sf"/>
</dbReference>
<dbReference type="NCBIfam" id="TIGR00256">
    <property type="entry name" value="D-aminoacyl-tRNA deacylase"/>
    <property type="match status" value="1"/>
</dbReference>
<dbReference type="PANTHER" id="PTHR10472:SF5">
    <property type="entry name" value="D-AMINOACYL-TRNA DEACYLASE 1"/>
    <property type="match status" value="1"/>
</dbReference>
<dbReference type="PANTHER" id="PTHR10472">
    <property type="entry name" value="D-TYROSYL-TRNA TYR DEACYLASE"/>
    <property type="match status" value="1"/>
</dbReference>
<dbReference type="Pfam" id="PF02580">
    <property type="entry name" value="Tyr_Deacylase"/>
    <property type="match status" value="1"/>
</dbReference>
<dbReference type="SUPFAM" id="SSF69500">
    <property type="entry name" value="DTD-like"/>
    <property type="match status" value="1"/>
</dbReference>
<keyword id="KW-0963">Cytoplasm</keyword>
<keyword id="KW-0378">Hydrolase</keyword>
<keyword id="KW-0694">RNA-binding</keyword>
<keyword id="KW-0820">tRNA-binding</keyword>
<proteinExistence type="inferred from homology"/>
<feature type="chain" id="PRO_0000259323" description="D-aminoacyl-tRNA deacylase">
    <location>
        <begin position="1"/>
        <end position="147"/>
    </location>
</feature>
<feature type="short sequence motif" description="Gly-cisPro motif, important for rejection of L-amino acids" evidence="1">
    <location>
        <begin position="136"/>
        <end position="137"/>
    </location>
</feature>
<reference key="1">
    <citation type="journal article" date="2006" name="Proc. Natl. Acad. Sci. U.S.A.">
        <title>Molecular genetic anatomy of inter- and intraserotype variation in the human bacterial pathogen group A Streptococcus.</title>
        <authorList>
            <person name="Beres S.B."/>
            <person name="Richter E.W."/>
            <person name="Nagiec M.J."/>
            <person name="Sumby P."/>
            <person name="Porcella S.F."/>
            <person name="DeLeo F.R."/>
            <person name="Musser J.M."/>
        </authorList>
    </citation>
    <scope>NUCLEOTIDE SEQUENCE [LARGE SCALE GENOMIC DNA]</scope>
    <source>
        <strain>MGAS10270</strain>
    </source>
</reference>